<name>PEX34_YEAST</name>
<comment type="function">
    <text evidence="3">In concert with the three peroxisome divisional factors, PEX11, PEX25 and PEX27, controls peroxisome morphology and abundance under conditions of peroxisome proliferation. Maintains mature peroxisomes in actively dividing cells.</text>
</comment>
<comment type="subunit">
    <text evidence="3">Homooligomer. Interacts with PEX11, PEX25 and PEX27.</text>
</comment>
<comment type="subcellular location">
    <subcellularLocation>
        <location evidence="2 3">Peroxisome membrane</location>
        <topology evidence="2 3">Multi-pass membrane protein</topology>
    </subcellularLocation>
</comment>
<reference key="1">
    <citation type="journal article" date="1992" name="Yeast">
        <title>Nucleotide sequence of D10B, a BamHI fragment on the small-ring chromosome III of Saccharomyces cerevisiae.</title>
        <authorList>
            <person name="Defoor E."/>
            <person name="Debrabandere R."/>
            <person name="Keyers B."/>
            <person name="Voet M."/>
            <person name="Volckaert G."/>
        </authorList>
    </citation>
    <scope>NUCLEOTIDE SEQUENCE [GENOMIC DNA]</scope>
</reference>
<reference key="2">
    <citation type="journal article" date="1992" name="Nature">
        <title>The complete DNA sequence of yeast chromosome III.</title>
        <authorList>
            <person name="Oliver S.G."/>
            <person name="van der Aart Q.J.M."/>
            <person name="Agostoni-Carbone M.L."/>
            <person name="Aigle M."/>
            <person name="Alberghina L."/>
            <person name="Alexandraki D."/>
            <person name="Antoine G."/>
            <person name="Anwar R."/>
            <person name="Ballesta J.P.G."/>
            <person name="Benit P."/>
            <person name="Berben G."/>
            <person name="Bergantino E."/>
            <person name="Biteau N."/>
            <person name="Bolle P.-A."/>
            <person name="Bolotin-Fukuhara M."/>
            <person name="Brown A."/>
            <person name="Brown A.J.P."/>
            <person name="Buhler J.-M."/>
            <person name="Carcano C."/>
            <person name="Carignani G."/>
            <person name="Cederberg H."/>
            <person name="Chanet R."/>
            <person name="Contreras R."/>
            <person name="Crouzet M."/>
            <person name="Daignan-Fornier B."/>
            <person name="Defoor E."/>
            <person name="Delgado M.D."/>
            <person name="Demolder J."/>
            <person name="Doira C."/>
            <person name="Dubois E."/>
            <person name="Dujon B."/>
            <person name="Duesterhoeft A."/>
            <person name="Erdmann D."/>
            <person name="Esteban M."/>
            <person name="Fabre F."/>
            <person name="Fairhead C."/>
            <person name="Faye G."/>
            <person name="Feldmann H."/>
            <person name="Fiers W."/>
            <person name="Francingues-Gaillard M.-C."/>
            <person name="Franco L."/>
            <person name="Frontali L."/>
            <person name="Fukuhara H."/>
            <person name="Fuller L.J."/>
            <person name="Galland P."/>
            <person name="Gent M.E."/>
            <person name="Gigot D."/>
            <person name="Gilliquet V."/>
            <person name="Glansdorff N."/>
            <person name="Goffeau A."/>
            <person name="Grenson M."/>
            <person name="Grisanti P."/>
            <person name="Grivell L.A."/>
            <person name="de Haan M."/>
            <person name="Haasemann M."/>
            <person name="Hatat D."/>
            <person name="Hoenicka J."/>
            <person name="Hegemann J.H."/>
            <person name="Herbert C.J."/>
            <person name="Hilger F."/>
            <person name="Hohmann S."/>
            <person name="Hollenberg C.P."/>
            <person name="Huse K."/>
            <person name="Iborra F."/>
            <person name="Indge K.J."/>
            <person name="Isono K."/>
            <person name="Jacq C."/>
            <person name="Jacquet M."/>
            <person name="James C.M."/>
            <person name="Jauniaux J.-C."/>
            <person name="Jia Y."/>
            <person name="Jimenez A."/>
            <person name="Kelly A."/>
            <person name="Kleinhans U."/>
            <person name="Kreisl P."/>
            <person name="Lanfranchi G."/>
            <person name="Lewis C."/>
            <person name="van der Linden C.G."/>
            <person name="Lucchini G."/>
            <person name="Lutzenkirchen K."/>
            <person name="Maat M.J."/>
            <person name="Mallet L."/>
            <person name="Mannhaupt G."/>
            <person name="Martegani E."/>
            <person name="Mathieu A."/>
            <person name="Maurer C.T.C."/>
            <person name="McConnell D."/>
            <person name="McKee R.A."/>
            <person name="Messenguy F."/>
            <person name="Mewes H.-W."/>
            <person name="Molemans F."/>
            <person name="Montague M.A."/>
            <person name="Muzi Falconi M."/>
            <person name="Navas L."/>
            <person name="Newlon C.S."/>
            <person name="Noone D."/>
            <person name="Pallier C."/>
            <person name="Panzeri L."/>
            <person name="Pearson B.M."/>
            <person name="Perea J."/>
            <person name="Philippsen P."/>
            <person name="Pierard A."/>
            <person name="Planta R.J."/>
            <person name="Plevani P."/>
            <person name="Poetsch B."/>
            <person name="Pohl F.M."/>
            <person name="Purnelle B."/>
            <person name="Ramezani Rad M."/>
            <person name="Rasmussen S.W."/>
            <person name="Raynal A."/>
            <person name="Remacha M.A."/>
            <person name="Richterich P."/>
            <person name="Roberts A.B."/>
            <person name="Rodriguez F."/>
            <person name="Sanz E."/>
            <person name="Schaaff-Gerstenschlaeger I."/>
            <person name="Scherens B."/>
            <person name="Schweitzer B."/>
            <person name="Shu Y."/>
            <person name="Skala J."/>
            <person name="Slonimski P.P."/>
            <person name="Sor F."/>
            <person name="Soustelle C."/>
            <person name="Spiegelberg R."/>
            <person name="Stateva L.I."/>
            <person name="Steensma H.Y."/>
            <person name="Steiner S."/>
            <person name="Thierry A."/>
            <person name="Thireos G."/>
            <person name="Tzermia M."/>
            <person name="Urrestarazu L.A."/>
            <person name="Valle G."/>
            <person name="Vetter I."/>
            <person name="van Vliet-Reedijk J.C."/>
            <person name="Voet M."/>
            <person name="Volckaert G."/>
            <person name="Vreken P."/>
            <person name="Wang H."/>
            <person name="Warmington J.R."/>
            <person name="von Wettstein D."/>
            <person name="Wicksteed B.L."/>
            <person name="Wilson C."/>
            <person name="Wurst H."/>
            <person name="Xu G."/>
            <person name="Yoshikawa A."/>
            <person name="Zimmermann F.K."/>
            <person name="Sgouros J.G."/>
        </authorList>
    </citation>
    <scope>NUCLEOTIDE SEQUENCE [LARGE SCALE GENOMIC DNA]</scope>
    <source>
        <strain>ATCC 204508 / S288c</strain>
    </source>
</reference>
<reference key="3">
    <citation type="journal article" date="2014" name="G3 (Bethesda)">
        <title>The reference genome sequence of Saccharomyces cerevisiae: Then and now.</title>
        <authorList>
            <person name="Engel S.R."/>
            <person name="Dietrich F.S."/>
            <person name="Fisk D.G."/>
            <person name="Binkley G."/>
            <person name="Balakrishnan R."/>
            <person name="Costanzo M.C."/>
            <person name="Dwight S.S."/>
            <person name="Hitz B.C."/>
            <person name="Karra K."/>
            <person name="Nash R.S."/>
            <person name="Weng S."/>
            <person name="Wong E.D."/>
            <person name="Lloyd P."/>
            <person name="Skrzypek M.S."/>
            <person name="Miyasato S.R."/>
            <person name="Simison M."/>
            <person name="Cherry J.M."/>
        </authorList>
    </citation>
    <scope>GENOME REANNOTATION</scope>
    <source>
        <strain>ATCC 204508 / S288c</strain>
    </source>
</reference>
<reference key="4">
    <citation type="journal article" date="2003" name="Nature">
        <title>Global analysis of protein localization in budding yeast.</title>
        <authorList>
            <person name="Huh W.-K."/>
            <person name="Falvo J.V."/>
            <person name="Gerke L.C."/>
            <person name="Carroll A.S."/>
            <person name="Howson R.W."/>
            <person name="Weissman J.S."/>
            <person name="O'Shea E.K."/>
        </authorList>
    </citation>
    <scope>SUBCELLULAR LOCATION [LARGE SCALE ANALYSIS]</scope>
</reference>
<reference key="5">
    <citation type="journal article" date="2011" name="Mol. Biol. Cell">
        <title>The peroxin Pex34p functions with the Pex11 family of peroxisomal divisional proteins to regulate the peroxisome population in yeast.</title>
        <authorList>
            <person name="Tower R.J."/>
            <person name="Fagarasanu A."/>
            <person name="Aitchison J.D."/>
            <person name="Rachubinski R.A."/>
        </authorList>
    </citation>
    <scope>SUBCELLULAR LOCATION</scope>
    <scope>FUNCTION</scope>
    <scope>SUBUNIT</scope>
    <scope>INTERACTION WITH PEX11; PEX25 AND PEX27</scope>
</reference>
<sequence>MVSKKNTAEISAKDIWENIWSGVSSLLDFFAVLENLGVVNDKLYVSGLLRKVWLCYSCISVIKCVWKLIKLCKVKFKIDQRLDGEGNGLVKDKLINFKKKYNEHIRHITAALLQDLSYLMVLIYPGTRLFKRLSNIITLCRIIV</sequence>
<feature type="chain" id="PRO_0000202551" description="Peroxisomal membrane protein PEX34">
    <location>
        <begin position="1"/>
        <end position="144"/>
    </location>
</feature>
<feature type="transmembrane region" description="Helical" evidence="1">
    <location>
        <begin position="18"/>
        <end position="30"/>
    </location>
</feature>
<feature type="transmembrane region" description="Helical" evidence="1">
    <location>
        <begin position="52"/>
        <end position="73"/>
    </location>
</feature>
<feature type="transmembrane region" description="Helical" evidence="1">
    <location>
        <begin position="109"/>
        <end position="131"/>
    </location>
</feature>
<organism>
    <name type="scientific">Saccharomyces cerevisiae (strain ATCC 204508 / S288c)</name>
    <name type="common">Baker's yeast</name>
    <dbReference type="NCBI Taxonomy" id="559292"/>
    <lineage>
        <taxon>Eukaryota</taxon>
        <taxon>Fungi</taxon>
        <taxon>Dikarya</taxon>
        <taxon>Ascomycota</taxon>
        <taxon>Saccharomycotina</taxon>
        <taxon>Saccharomycetes</taxon>
        <taxon>Saccharomycetales</taxon>
        <taxon>Saccharomycetaceae</taxon>
        <taxon>Saccharomyces</taxon>
    </lineage>
</organism>
<dbReference type="EMBL" id="X59720">
    <property type="protein sequence ID" value="CAA42389.1"/>
    <property type="molecule type" value="Genomic_DNA"/>
</dbReference>
<dbReference type="EMBL" id="BK006937">
    <property type="protein sequence ID" value="DAA07430.1"/>
    <property type="molecule type" value="Genomic_DNA"/>
</dbReference>
<dbReference type="PIR" id="S19386">
    <property type="entry name" value="S19386"/>
</dbReference>
<dbReference type="RefSeq" id="NP_009875.1">
    <property type="nucleotide sequence ID" value="NM_001178700.1"/>
</dbReference>
<dbReference type="BioGRID" id="30930">
    <property type="interactions" value="57"/>
</dbReference>
<dbReference type="DIP" id="DIP-2040N"/>
<dbReference type="FunCoup" id="P25584">
    <property type="interactions" value="47"/>
</dbReference>
<dbReference type="IntAct" id="P25584">
    <property type="interactions" value="18"/>
</dbReference>
<dbReference type="MINT" id="P25584"/>
<dbReference type="STRING" id="4932.YCL056C"/>
<dbReference type="TCDB" id="3.A.20.1.5">
    <property type="family name" value="the peroxisomal protein importer (ppi) family"/>
</dbReference>
<dbReference type="PaxDb" id="4932-YCL056C"/>
<dbReference type="PeptideAtlas" id="P25584"/>
<dbReference type="EnsemblFungi" id="YCL056C_mRNA">
    <property type="protein sequence ID" value="YCL056C"/>
    <property type="gene ID" value="YCL056C"/>
</dbReference>
<dbReference type="GeneID" id="850302"/>
<dbReference type="KEGG" id="sce:YCL056C"/>
<dbReference type="AGR" id="SGD:S000000561"/>
<dbReference type="SGD" id="S000000561">
    <property type="gene designation" value="PEX34"/>
</dbReference>
<dbReference type="VEuPathDB" id="FungiDB:YCL056C"/>
<dbReference type="HOGENOM" id="CLU_1797567_0_0_1"/>
<dbReference type="InParanoid" id="P25584"/>
<dbReference type="OrthoDB" id="4038995at2759"/>
<dbReference type="BioCyc" id="YEAST:G3O-29308-MONOMER"/>
<dbReference type="BioGRID-ORCS" id="850302">
    <property type="hits" value="0 hits in 10 CRISPR screens"/>
</dbReference>
<dbReference type="PRO" id="PR:P25584"/>
<dbReference type="Proteomes" id="UP000002311">
    <property type="component" value="Chromosome III"/>
</dbReference>
<dbReference type="RNAct" id="P25584">
    <property type="molecule type" value="protein"/>
</dbReference>
<dbReference type="GO" id="GO:0005737">
    <property type="term" value="C:cytoplasm"/>
    <property type="evidence" value="ECO:0007005"/>
    <property type="project" value="SGD"/>
</dbReference>
<dbReference type="GO" id="GO:0005778">
    <property type="term" value="C:peroxisomal membrane"/>
    <property type="evidence" value="ECO:0000314"/>
    <property type="project" value="SGD"/>
</dbReference>
<dbReference type="GO" id="GO:0160189">
    <property type="term" value="C:peroxisomal-mitochondrial contact site"/>
    <property type="evidence" value="ECO:0000314"/>
    <property type="project" value="SGD"/>
</dbReference>
<dbReference type="GO" id="GO:0160190">
    <property type="term" value="F:peroxisome-mitochondrion membrane tether activity"/>
    <property type="evidence" value="ECO:0000315"/>
    <property type="project" value="SGD"/>
</dbReference>
<dbReference type="GO" id="GO:0007031">
    <property type="term" value="P:peroxisome organization"/>
    <property type="evidence" value="ECO:0000315"/>
    <property type="project" value="SGD"/>
</dbReference>
<accession>P25584</accession>
<accession>D6VQW1</accession>
<protein>
    <recommendedName>
        <fullName>Peroxisomal membrane protein PEX34</fullName>
    </recommendedName>
    <alternativeName>
        <fullName>Peroxin-34</fullName>
    </alternativeName>
</protein>
<gene>
    <name type="primary">PEX34</name>
    <name type="ordered locus">YCL056C</name>
    <name type="ORF">YCL433</name>
    <name type="ORF">YCL56C</name>
</gene>
<evidence type="ECO:0000255" key="1"/>
<evidence type="ECO:0000269" key="2">
    <source>
    </source>
</evidence>
<evidence type="ECO:0000269" key="3">
    <source>
    </source>
</evidence>
<proteinExistence type="evidence at protein level"/>
<keyword id="KW-0472">Membrane</keyword>
<keyword id="KW-0576">Peroxisome</keyword>
<keyword id="KW-0962">Peroxisome biogenesis</keyword>
<keyword id="KW-1185">Reference proteome</keyword>
<keyword id="KW-0812">Transmembrane</keyword>
<keyword id="KW-1133">Transmembrane helix</keyword>